<evidence type="ECO:0000255" key="1"/>
<evidence type="ECO:0000255" key="2">
    <source>
        <dbReference type="PROSITE-ProRule" id="PRU00169"/>
    </source>
</evidence>
<evidence type="ECO:0000256" key="3">
    <source>
        <dbReference type="SAM" id="MobiDB-lite"/>
    </source>
</evidence>
<evidence type="ECO:0000269" key="4">
    <source>
    </source>
</evidence>
<evidence type="ECO:0000269" key="5">
    <source>
    </source>
</evidence>
<evidence type="ECO:0000305" key="6"/>
<sequence length="1395" mass="153616">MERRVLIVESEHDFALSMATVLKGAGYQTALAETAADAQRELEKRRPDLVVLRAELKDQSGFVLCGNIKKGKWGQNLKVLLLSSESGVDGLAQHRQTPQAADGYLAIPFEMGELAALSHGIVPPGTDDTGASLDAALNGTREAPPPMPPSLKAAAGGPPKLPKRERRSAMTEEDRAFLDRTFQSIADRKAELLAESRQLKRPPPRRELMGTPEGKIQILRDELKTREAQLARLSEIWNVRERELLSGEDRIHEKDVELQGLKMQVDDLLRRFNEAQQATIQKEREHGATVDDLLLQKFSAEKDLIEVVASKEKDINLLRREVSRAEEELSRRAGELEHGRNEYDKLEKHLGVVTLEFEVKEQKLQDTVLANEGEIARLTKRGDDFEAELNRTISERDQRFAELDGEIQALQERLQQTEQERDTTVRGLEARAARAEEHGTQADAEIHRLNAERDALEAKLSQQVADLEADLARTMGERDQLRLDKDAQEAELTQRIEERDAKLGTLERELSETIARNEHTEAELNANIQQQLERIGELEGEVEAVKTHLEDRENELTAELQALGQAKDELETDLNDRLQALSQAKDALEADLSRQLEELRSAKAELEADLTGQIQALTSQLEETQRQLDDSQRTGEQLSARVAQLEDTVSQRESTIESLQGDVAARDQRISELSGDLEATSQTLAQTQQTLAQTEQQLADTQNTLASTEGALAETRGELDATSQTLQQTQQTLAQTEGALAETRGELDATSQTLAQTQQTLAQTEQQLADTQNTLASTEGTLAETRGELEATSQTLQQTHAALEDTRGALQETSDTLAHTTRERDQRIAELADLGAAKDALEQELTGQIGHLRSELSETQGNYEAERAAHEKLAAESSAHIGDLTSERDGLRSELEATSQTLEQTHGQLAATRDALAREQHAHQESRKAAASTQTTLEGQLAEARAHGEDLGEHLTLTKHELGTRVAELTQLTATLAQTENTRAHLEERLHTLTEESQRREELLQNDLTQKGTELSDTLRKLTHVTQEKMRQAEVLNREVATRTEQLKAMEAKLQTQATEARRQAEGLGQQITGLNEQLEQGRKALAGREDQLRAAGAAQQKLTAERDGLAGQLQQAEARLQQQAQQANQERADAKRAADELAAKLAKTEQRITQFAQDAQTQATEADARAKDLQGQLSARAKKIQDLELAVENAQGAKSRAEKELNAKVAAAESKAHEASTRLAAAQKERKDLEARHAKEQEDLAAKQKAELERRDAIKAQEVARLQQSVQEKSKALKVAELELARYKSKSATTATPAKAAAKPAAAEDDELAVRTQLNQVIAPAAAAQAPAPAKKPAAKPAAQAPAKKAPAPAPAPPAALSDESEPTDRTLVIQLPTAKEDDDWTALVDELDK</sequence>
<dbReference type="EMBL" id="AY487937">
    <property type="protein sequence ID" value="AAR39422.1"/>
    <property type="molecule type" value="Genomic_DNA"/>
</dbReference>
<dbReference type="EMBL" id="CP000113">
    <property type="protein sequence ID" value="ABF92300.1"/>
    <property type="molecule type" value="Genomic_DNA"/>
</dbReference>
<dbReference type="RefSeq" id="WP_011553047.1">
    <property type="nucleotide sequence ID" value="NC_008095.1"/>
</dbReference>
<dbReference type="SMR" id="Q1D823"/>
<dbReference type="IntAct" id="Q1D823">
    <property type="interactions" value="13"/>
</dbReference>
<dbReference type="MINT" id="Q1D823"/>
<dbReference type="STRING" id="246197.MXAN_2991"/>
<dbReference type="EnsemblBacteria" id="ABF92300">
    <property type="protein sequence ID" value="ABF92300"/>
    <property type="gene ID" value="MXAN_2991"/>
</dbReference>
<dbReference type="GeneID" id="41360353"/>
<dbReference type="KEGG" id="mxa:MXAN_2991"/>
<dbReference type="eggNOG" id="COG0745">
    <property type="taxonomic scope" value="Bacteria"/>
</dbReference>
<dbReference type="eggNOG" id="COG1196">
    <property type="taxonomic scope" value="Bacteria"/>
</dbReference>
<dbReference type="HOGENOM" id="CLU_251724_0_0_7"/>
<dbReference type="OrthoDB" id="5376887at2"/>
<dbReference type="Proteomes" id="UP000002402">
    <property type="component" value="Chromosome"/>
</dbReference>
<dbReference type="GO" id="GO:0000785">
    <property type="term" value="C:chromatin"/>
    <property type="evidence" value="ECO:0007669"/>
    <property type="project" value="TreeGrafter"/>
</dbReference>
<dbReference type="GO" id="GO:0000793">
    <property type="term" value="C:condensed chromosome"/>
    <property type="evidence" value="ECO:0007669"/>
    <property type="project" value="TreeGrafter"/>
</dbReference>
<dbReference type="GO" id="GO:0000796">
    <property type="term" value="C:condensin complex"/>
    <property type="evidence" value="ECO:0007669"/>
    <property type="project" value="TreeGrafter"/>
</dbReference>
<dbReference type="GO" id="GO:0005737">
    <property type="term" value="C:cytoplasm"/>
    <property type="evidence" value="ECO:0007669"/>
    <property type="project" value="UniProtKB-SubCell"/>
</dbReference>
<dbReference type="GO" id="GO:0003682">
    <property type="term" value="F:chromatin binding"/>
    <property type="evidence" value="ECO:0007669"/>
    <property type="project" value="TreeGrafter"/>
</dbReference>
<dbReference type="GO" id="GO:0000160">
    <property type="term" value="P:phosphorelay signal transduction system"/>
    <property type="evidence" value="ECO:0007669"/>
    <property type="project" value="InterPro"/>
</dbReference>
<dbReference type="CDD" id="cd00156">
    <property type="entry name" value="REC"/>
    <property type="match status" value="1"/>
</dbReference>
<dbReference type="Gene3D" id="1.10.287.1490">
    <property type="match status" value="2"/>
</dbReference>
<dbReference type="Gene3D" id="3.40.50.2300">
    <property type="match status" value="1"/>
</dbReference>
<dbReference type="Gene3D" id="1.20.1480.30">
    <property type="entry name" value="Designed four-helix bundle protein"/>
    <property type="match status" value="1"/>
</dbReference>
<dbReference type="InterPro" id="IPR011006">
    <property type="entry name" value="CheY-like_superfamily"/>
</dbReference>
<dbReference type="InterPro" id="IPR001789">
    <property type="entry name" value="Sig_transdc_resp-reg_receiver"/>
</dbReference>
<dbReference type="PANTHER" id="PTHR43941">
    <property type="entry name" value="STRUCTURAL MAINTENANCE OF CHROMOSOMES PROTEIN 2"/>
    <property type="match status" value="1"/>
</dbReference>
<dbReference type="PANTHER" id="PTHR43941:SF1">
    <property type="entry name" value="STRUCTURAL MAINTENANCE OF CHROMOSOMES PROTEIN 2"/>
    <property type="match status" value="1"/>
</dbReference>
<dbReference type="Pfam" id="PF00072">
    <property type="entry name" value="Response_reg"/>
    <property type="match status" value="1"/>
</dbReference>
<dbReference type="SMART" id="SM00448">
    <property type="entry name" value="REC"/>
    <property type="match status" value="1"/>
</dbReference>
<dbReference type="SUPFAM" id="SSF52172">
    <property type="entry name" value="CheY-like"/>
    <property type="match status" value="1"/>
</dbReference>
<dbReference type="SUPFAM" id="SSF57997">
    <property type="entry name" value="Tropomyosin"/>
    <property type="match status" value="1"/>
</dbReference>
<dbReference type="PROSITE" id="PS50110">
    <property type="entry name" value="RESPONSE_REGULATORY"/>
    <property type="match status" value="1"/>
</dbReference>
<protein>
    <recommendedName>
        <fullName>Adventurous-gliding motility protein Z</fullName>
    </recommendedName>
</protein>
<proteinExistence type="evidence at protein level"/>
<feature type="chain" id="PRO_0000282834" description="Adventurous-gliding motility protein Z">
    <location>
        <begin position="1"/>
        <end position="1395"/>
    </location>
</feature>
<feature type="domain" description="Response regulatory" evidence="2">
    <location>
        <begin position="4"/>
        <end position="122"/>
    </location>
</feature>
<feature type="region of interest" description="Disordered" evidence="3">
    <location>
        <begin position="137"/>
        <end position="172"/>
    </location>
</feature>
<feature type="region of interest" description="Disordered" evidence="3">
    <location>
        <begin position="874"/>
        <end position="893"/>
    </location>
</feature>
<feature type="region of interest" description="Disordered" evidence="3">
    <location>
        <begin position="919"/>
        <end position="947"/>
    </location>
</feature>
<feature type="region of interest" description="Disordered" evidence="3">
    <location>
        <begin position="1212"/>
        <end position="1249"/>
    </location>
</feature>
<feature type="region of interest" description="Disordered" evidence="3">
    <location>
        <begin position="1287"/>
        <end position="1312"/>
    </location>
</feature>
<feature type="region of interest" description="Disordered" evidence="3">
    <location>
        <begin position="1326"/>
        <end position="1395"/>
    </location>
</feature>
<feature type="coiled-coil region" evidence="1">
    <location>
        <begin position="213"/>
        <end position="911"/>
    </location>
</feature>
<feature type="compositionally biased region" description="Basic and acidic residues" evidence="3">
    <location>
        <begin position="919"/>
        <end position="928"/>
    </location>
</feature>
<feature type="compositionally biased region" description="Basic and acidic residues" evidence="3">
    <location>
        <begin position="1228"/>
        <end position="1249"/>
    </location>
</feature>
<feature type="compositionally biased region" description="Low complexity" evidence="3">
    <location>
        <begin position="1291"/>
        <end position="1306"/>
    </location>
</feature>
<feature type="compositionally biased region" description="Low complexity" evidence="3">
    <location>
        <begin position="1326"/>
        <end position="1352"/>
    </location>
</feature>
<feature type="compositionally biased region" description="Acidic residues" evidence="3">
    <location>
        <begin position="1382"/>
        <end position="1395"/>
    </location>
</feature>
<feature type="modified residue" description="4-aspartylphosphate" evidence="2">
    <location>
        <position position="48"/>
    </location>
</feature>
<feature type="sequence conflict" description="In Ref. 1; AAR39422." evidence="6" ref="1">
    <original>Q</original>
    <variation>R</variation>
    <location>
        <position position="763"/>
    </location>
</feature>
<keyword id="KW-0175">Coiled coil</keyword>
<keyword id="KW-0963">Cytoplasm</keyword>
<keyword id="KW-0505">Motor protein</keyword>
<keyword id="KW-0597">Phosphoprotein</keyword>
<keyword id="KW-1185">Reference proteome</keyword>
<comment type="function">
    <text evidence="4 5">Required for adventurous-gliding motility (A motility), in response to environmental signals sensed by the frz chemosensory system. Forms ordered clusters that span the cell length and that remain stationary relative to the surface across which the cells move, serving as anchor points (focal, transient adhesion sites) that allow the bacterium to move forward. Clusters disassemble at the lagging cell pole.</text>
</comment>
<comment type="subunit">
    <text evidence="4">Interacts with MglA.</text>
</comment>
<comment type="interaction">
    <interactant intactId="EBI-1574592">
        <id>Q1D823</id>
    </interactant>
    <interactant intactId="EBI-6407529">
        <id>Q1D4V7</id>
        <label>frzCD</label>
    </interactant>
    <organismsDiffer>false</organismsDiffer>
    <experiments>4</experiments>
</comment>
<comment type="subcellular location">
    <subcellularLocation>
        <location evidence="5">Cytoplasm</location>
    </subcellularLocation>
    <text>In motile cells, localizes in ordered clusters spanning the cell length. In stalled cells, localizes at the leading cell pole.</text>
</comment>
<comment type="online information" name="Protein Spotlight">
    <link uri="https://www.proteinspotlight.org/back_issues/081"/>
    <text>Slip sliding away - Issue 81 of April 2007</text>
</comment>
<accession>Q1D823</accession>
<accession>Q6RW49</accession>
<reference key="1">
    <citation type="journal article" date="2004" name="J. Bacteriol.">
        <title>AglZ is a filament-forming coiled-coil protein required for adventurous gliding motility of Myxococcus xanthus.</title>
        <authorList>
            <person name="Yang R."/>
            <person name="Bartle S."/>
            <person name="Otto R."/>
            <person name="Stassinopoulos A.G."/>
            <person name="Rogers M."/>
            <person name="Plamann L."/>
            <person name="Hartzell P.L."/>
        </authorList>
    </citation>
    <scope>NUCLEOTIDE SEQUENCE [GENOMIC DNA]</scope>
    <scope>FUNCTION</scope>
    <scope>INTERACTION WITH MGLA</scope>
</reference>
<reference key="2">
    <citation type="journal article" date="2006" name="Proc. Natl. Acad. Sci. U.S.A.">
        <title>Evolution of sensory complexity recorded in a myxobacterial genome.</title>
        <authorList>
            <person name="Goldman B.S."/>
            <person name="Nierman W.C."/>
            <person name="Kaiser D."/>
            <person name="Slater S.C."/>
            <person name="Durkin A.S."/>
            <person name="Eisen J.A."/>
            <person name="Ronning C.M."/>
            <person name="Barbazuk W.B."/>
            <person name="Blanchard M."/>
            <person name="Field C."/>
            <person name="Halling C."/>
            <person name="Hinkle G."/>
            <person name="Iartchuk O."/>
            <person name="Kim H.S."/>
            <person name="Mackenzie C."/>
            <person name="Madupu R."/>
            <person name="Miller N."/>
            <person name="Shvartsbeyn A."/>
            <person name="Sullivan S.A."/>
            <person name="Vaudin M."/>
            <person name="Wiegand R."/>
            <person name="Kaplan H.B."/>
        </authorList>
    </citation>
    <scope>NUCLEOTIDE SEQUENCE [LARGE SCALE GENOMIC DNA]</scope>
    <source>
        <strain>DK1622</strain>
    </source>
</reference>
<reference key="3">
    <citation type="journal article" date="2007" name="Science">
        <title>Evidence that focal adhesion complexes power bacterial gliding motility.</title>
        <authorList>
            <person name="Mignot T."/>
            <person name="Shaevitz J.W."/>
            <person name="Hartzell P.L."/>
            <person name="Zusman D.R."/>
        </authorList>
    </citation>
    <scope>ROLE IN A-TYPE GLIDING MOTILITY</scope>
    <scope>SUBCELLULAR LOCATION</scope>
</reference>
<name>AGLZ_MYXXD</name>
<organism>
    <name type="scientific">Myxococcus xanthus (strain DK1622)</name>
    <dbReference type="NCBI Taxonomy" id="246197"/>
    <lineage>
        <taxon>Bacteria</taxon>
        <taxon>Pseudomonadati</taxon>
        <taxon>Myxococcota</taxon>
        <taxon>Myxococcia</taxon>
        <taxon>Myxococcales</taxon>
        <taxon>Cystobacterineae</taxon>
        <taxon>Myxococcaceae</taxon>
        <taxon>Myxococcus</taxon>
    </lineage>
</organism>
<gene>
    <name type="primary">aglZ</name>
    <name type="ordered locus">MXAN_2991</name>
</gene>